<protein>
    <recommendedName>
        <fullName evidence="1">UPF0386 protein mll0189</fullName>
    </recommendedName>
</protein>
<feature type="chain" id="PRO_0000252184" description="UPF0386 protein mll0189">
    <location>
        <begin position="1"/>
        <end position="99"/>
    </location>
</feature>
<comment type="similarity">
    <text evidence="1">Belongs to the UPF0386 family.</text>
</comment>
<accession>Q98ND4</accession>
<proteinExistence type="inferred from homology"/>
<dbReference type="EMBL" id="BA000012">
    <property type="protein sequence ID" value="BAB47827.1"/>
    <property type="molecule type" value="Genomic_DNA"/>
</dbReference>
<dbReference type="KEGG" id="mlo:mll0189"/>
<dbReference type="eggNOG" id="COG3811">
    <property type="taxonomic scope" value="Bacteria"/>
</dbReference>
<dbReference type="HOGENOM" id="CLU_164736_0_0_5"/>
<dbReference type="Proteomes" id="UP000000552">
    <property type="component" value="Chromosome"/>
</dbReference>
<dbReference type="HAMAP" id="MF_00827">
    <property type="entry name" value="UPF0386"/>
    <property type="match status" value="1"/>
</dbReference>
<dbReference type="InterPro" id="IPR018654">
    <property type="entry name" value="YjhX_toxin"/>
</dbReference>
<dbReference type="NCBIfam" id="NF010240">
    <property type="entry name" value="PRK13687.1"/>
    <property type="match status" value="1"/>
</dbReference>
<dbReference type="Pfam" id="PF09857">
    <property type="entry name" value="YjhX_toxin"/>
    <property type="match status" value="1"/>
</dbReference>
<organism>
    <name type="scientific">Mesorhizobium japonicum (strain LMG 29417 / CECT 9101 / MAFF 303099)</name>
    <name type="common">Mesorhizobium loti (strain MAFF 303099)</name>
    <dbReference type="NCBI Taxonomy" id="266835"/>
    <lineage>
        <taxon>Bacteria</taxon>
        <taxon>Pseudomonadati</taxon>
        <taxon>Pseudomonadota</taxon>
        <taxon>Alphaproteobacteria</taxon>
        <taxon>Hyphomicrobiales</taxon>
        <taxon>Phyllobacteriaceae</taxon>
        <taxon>Mesorhizobium</taxon>
    </lineage>
</organism>
<name>Y189_RHILO</name>
<evidence type="ECO:0000255" key="1">
    <source>
        <dbReference type="HAMAP-Rule" id="MF_00827"/>
    </source>
</evidence>
<sequence length="99" mass="11245">MPHYNCHSVLCASKRTRGAVGQRILHMLAQGGRIEIEKNQKKRIASVKCLTRDGWHHPGVDLDLFRKLKRKKAVSSSGGGPYRITRRGLELVRSELDNR</sequence>
<gene>
    <name type="ordered locus">mll0189</name>
</gene>
<reference key="1">
    <citation type="journal article" date="2000" name="DNA Res.">
        <title>Complete genome structure of the nitrogen-fixing symbiotic bacterium Mesorhizobium loti.</title>
        <authorList>
            <person name="Kaneko T."/>
            <person name="Nakamura Y."/>
            <person name="Sato S."/>
            <person name="Asamizu E."/>
            <person name="Kato T."/>
            <person name="Sasamoto S."/>
            <person name="Watanabe A."/>
            <person name="Idesawa K."/>
            <person name="Ishikawa A."/>
            <person name="Kawashima K."/>
            <person name="Kimura T."/>
            <person name="Kishida Y."/>
            <person name="Kiyokawa C."/>
            <person name="Kohara M."/>
            <person name="Matsumoto M."/>
            <person name="Matsuno A."/>
            <person name="Mochizuki Y."/>
            <person name="Nakayama S."/>
            <person name="Nakazaki N."/>
            <person name="Shimpo S."/>
            <person name="Sugimoto M."/>
            <person name="Takeuchi C."/>
            <person name="Yamada M."/>
            <person name="Tabata S."/>
        </authorList>
    </citation>
    <scope>NUCLEOTIDE SEQUENCE [LARGE SCALE GENOMIC DNA]</scope>
    <source>
        <strain>LMG 29417 / CECT 9101 / MAFF 303099</strain>
    </source>
</reference>